<comment type="function">
    <text evidence="1">Catalyzes the ATP-dependent conversion of 7-carboxy-7-deazaguanine (CDG) to 7-cyano-7-deazaguanine (preQ(0)).</text>
</comment>
<comment type="catalytic activity">
    <reaction evidence="1">
        <text>7-carboxy-7-deazaguanine + NH4(+) + ATP = 7-cyano-7-deazaguanine + ADP + phosphate + H2O + H(+)</text>
        <dbReference type="Rhea" id="RHEA:27982"/>
        <dbReference type="ChEBI" id="CHEBI:15377"/>
        <dbReference type="ChEBI" id="CHEBI:15378"/>
        <dbReference type="ChEBI" id="CHEBI:28938"/>
        <dbReference type="ChEBI" id="CHEBI:30616"/>
        <dbReference type="ChEBI" id="CHEBI:43474"/>
        <dbReference type="ChEBI" id="CHEBI:45075"/>
        <dbReference type="ChEBI" id="CHEBI:61036"/>
        <dbReference type="ChEBI" id="CHEBI:456216"/>
        <dbReference type="EC" id="6.3.4.20"/>
    </reaction>
</comment>
<comment type="cofactor">
    <cofactor evidence="1">
        <name>Zn(2+)</name>
        <dbReference type="ChEBI" id="CHEBI:29105"/>
    </cofactor>
    <text evidence="1">Binds 1 zinc ion per subunit.</text>
</comment>
<comment type="pathway">
    <text evidence="1">Purine metabolism; 7-cyano-7-deazaguanine biosynthesis.</text>
</comment>
<comment type="similarity">
    <text evidence="1">Belongs to the QueC family.</text>
</comment>
<protein>
    <recommendedName>
        <fullName evidence="1">7-cyano-7-deazaguanine synthase</fullName>
        <ecNumber evidence="1">6.3.4.20</ecNumber>
    </recommendedName>
    <alternativeName>
        <fullName evidence="1">7-cyano-7-carbaguanine synthase</fullName>
    </alternativeName>
    <alternativeName>
        <fullName evidence="1">PreQ(0) synthase</fullName>
    </alternativeName>
    <alternativeName>
        <fullName evidence="1">Queuosine biosynthesis protein QueC</fullName>
    </alternativeName>
</protein>
<sequence>MKTIVVCSGGLDSVTLAHKVAAEQQLIGLVSFDYGQRHRKELDFAARCASRLSVPHHIIDIAGIGGHLSGSALTDNVEVPDGHYAEETMKATVVPNRNAIMLAIAFGLAAAQKADAVAVAVHGGDHFIYPDCRPGFIEAFQRMQNEALEGYASVKLLAPYVDVSKAAIVVDGEKHGTPFSETWSCYKGGEPHCGRCGTCVERREAFHLAGVPDPTAYEDQDFWKAAISRYSATEVR</sequence>
<feature type="chain" id="PRO_0000246899" description="7-cyano-7-deazaguanine synthase">
    <location>
        <begin position="1"/>
        <end position="236"/>
    </location>
</feature>
<feature type="binding site" evidence="1">
    <location>
        <begin position="7"/>
        <end position="17"/>
    </location>
    <ligand>
        <name>ATP</name>
        <dbReference type="ChEBI" id="CHEBI:30616"/>
    </ligand>
</feature>
<feature type="binding site" evidence="1">
    <location>
        <position position="185"/>
    </location>
    <ligand>
        <name>Zn(2+)</name>
        <dbReference type="ChEBI" id="CHEBI:29105"/>
    </ligand>
</feature>
<feature type="binding site" evidence="1">
    <location>
        <position position="193"/>
    </location>
    <ligand>
        <name>Zn(2+)</name>
        <dbReference type="ChEBI" id="CHEBI:29105"/>
    </ligand>
</feature>
<feature type="binding site" evidence="1">
    <location>
        <position position="196"/>
    </location>
    <ligand>
        <name>Zn(2+)</name>
        <dbReference type="ChEBI" id="CHEBI:29105"/>
    </ligand>
</feature>
<feature type="binding site" evidence="1">
    <location>
        <position position="199"/>
    </location>
    <ligand>
        <name>Zn(2+)</name>
        <dbReference type="ChEBI" id="CHEBI:29105"/>
    </ligand>
</feature>
<accession>Q1MBE0</accession>
<dbReference type="EC" id="6.3.4.20" evidence="1"/>
<dbReference type="EMBL" id="AM236080">
    <property type="protein sequence ID" value="CAK09743.1"/>
    <property type="molecule type" value="Genomic_DNA"/>
</dbReference>
<dbReference type="RefSeq" id="WP_011653649.1">
    <property type="nucleotide sequence ID" value="NC_008380.1"/>
</dbReference>
<dbReference type="SMR" id="Q1MBE0"/>
<dbReference type="EnsemblBacteria" id="CAK09743">
    <property type="protein sequence ID" value="CAK09743"/>
    <property type="gene ID" value="RL4254"/>
</dbReference>
<dbReference type="KEGG" id="rle:RL4254"/>
<dbReference type="eggNOG" id="COG0603">
    <property type="taxonomic scope" value="Bacteria"/>
</dbReference>
<dbReference type="HOGENOM" id="CLU_081854_1_0_5"/>
<dbReference type="UniPathway" id="UPA00391"/>
<dbReference type="Proteomes" id="UP000006575">
    <property type="component" value="Chromosome"/>
</dbReference>
<dbReference type="GO" id="GO:0005524">
    <property type="term" value="F:ATP binding"/>
    <property type="evidence" value="ECO:0007669"/>
    <property type="project" value="UniProtKB-UniRule"/>
</dbReference>
<dbReference type="GO" id="GO:0016879">
    <property type="term" value="F:ligase activity, forming carbon-nitrogen bonds"/>
    <property type="evidence" value="ECO:0007669"/>
    <property type="project" value="UniProtKB-UniRule"/>
</dbReference>
<dbReference type="GO" id="GO:0008270">
    <property type="term" value="F:zinc ion binding"/>
    <property type="evidence" value="ECO:0007669"/>
    <property type="project" value="UniProtKB-UniRule"/>
</dbReference>
<dbReference type="GO" id="GO:0008616">
    <property type="term" value="P:queuosine biosynthetic process"/>
    <property type="evidence" value="ECO:0007669"/>
    <property type="project" value="UniProtKB-UniRule"/>
</dbReference>
<dbReference type="CDD" id="cd01995">
    <property type="entry name" value="QueC-like"/>
    <property type="match status" value="1"/>
</dbReference>
<dbReference type="Gene3D" id="3.40.50.620">
    <property type="entry name" value="HUPs"/>
    <property type="match status" value="1"/>
</dbReference>
<dbReference type="HAMAP" id="MF_01633">
    <property type="entry name" value="QueC"/>
    <property type="match status" value="1"/>
</dbReference>
<dbReference type="InterPro" id="IPR018317">
    <property type="entry name" value="QueC"/>
</dbReference>
<dbReference type="InterPro" id="IPR014729">
    <property type="entry name" value="Rossmann-like_a/b/a_fold"/>
</dbReference>
<dbReference type="NCBIfam" id="TIGR00364">
    <property type="entry name" value="7-cyano-7-deazaguanine synthase QueC"/>
    <property type="match status" value="1"/>
</dbReference>
<dbReference type="PANTHER" id="PTHR42914">
    <property type="entry name" value="7-CYANO-7-DEAZAGUANINE SYNTHASE"/>
    <property type="match status" value="1"/>
</dbReference>
<dbReference type="PANTHER" id="PTHR42914:SF1">
    <property type="entry name" value="7-CYANO-7-DEAZAGUANINE SYNTHASE"/>
    <property type="match status" value="1"/>
</dbReference>
<dbReference type="Pfam" id="PF06508">
    <property type="entry name" value="QueC"/>
    <property type="match status" value="1"/>
</dbReference>
<dbReference type="PIRSF" id="PIRSF006293">
    <property type="entry name" value="ExsB"/>
    <property type="match status" value="1"/>
</dbReference>
<dbReference type="SUPFAM" id="SSF52402">
    <property type="entry name" value="Adenine nucleotide alpha hydrolases-like"/>
    <property type="match status" value="1"/>
</dbReference>
<name>QUEC_RHIJ3</name>
<proteinExistence type="inferred from homology"/>
<keyword id="KW-0067">ATP-binding</keyword>
<keyword id="KW-0436">Ligase</keyword>
<keyword id="KW-0479">Metal-binding</keyword>
<keyword id="KW-0547">Nucleotide-binding</keyword>
<keyword id="KW-0671">Queuosine biosynthesis</keyword>
<keyword id="KW-0862">Zinc</keyword>
<reference key="1">
    <citation type="journal article" date="2006" name="Genome Biol.">
        <title>The genome of Rhizobium leguminosarum has recognizable core and accessory components.</title>
        <authorList>
            <person name="Young J.P.W."/>
            <person name="Crossman L.C."/>
            <person name="Johnston A.W.B."/>
            <person name="Thomson N.R."/>
            <person name="Ghazoui Z.F."/>
            <person name="Hull K.H."/>
            <person name="Wexler M."/>
            <person name="Curson A.R.J."/>
            <person name="Todd J.D."/>
            <person name="Poole P.S."/>
            <person name="Mauchline T.H."/>
            <person name="East A.K."/>
            <person name="Quail M.A."/>
            <person name="Churcher C."/>
            <person name="Arrowsmith C."/>
            <person name="Cherevach I."/>
            <person name="Chillingworth T."/>
            <person name="Clarke K."/>
            <person name="Cronin A."/>
            <person name="Davis P."/>
            <person name="Fraser A."/>
            <person name="Hance Z."/>
            <person name="Hauser H."/>
            <person name="Jagels K."/>
            <person name="Moule S."/>
            <person name="Mungall K."/>
            <person name="Norbertczak H."/>
            <person name="Rabbinowitsch E."/>
            <person name="Sanders M."/>
            <person name="Simmonds M."/>
            <person name="Whitehead S."/>
            <person name="Parkhill J."/>
        </authorList>
    </citation>
    <scope>NUCLEOTIDE SEQUENCE [LARGE SCALE GENOMIC DNA]</scope>
    <source>
        <strain>DSM 114642 / LMG 32736 / 3841</strain>
    </source>
</reference>
<organism>
    <name type="scientific">Rhizobium johnstonii (strain DSM 114642 / LMG 32736 / 3841)</name>
    <name type="common">Rhizobium leguminosarum bv. viciae</name>
    <dbReference type="NCBI Taxonomy" id="216596"/>
    <lineage>
        <taxon>Bacteria</taxon>
        <taxon>Pseudomonadati</taxon>
        <taxon>Pseudomonadota</taxon>
        <taxon>Alphaproteobacteria</taxon>
        <taxon>Hyphomicrobiales</taxon>
        <taxon>Rhizobiaceae</taxon>
        <taxon>Rhizobium/Agrobacterium group</taxon>
        <taxon>Rhizobium</taxon>
        <taxon>Rhizobium johnstonii</taxon>
    </lineage>
</organism>
<gene>
    <name evidence="1" type="primary">queC</name>
    <name type="ordered locus">RL4254</name>
</gene>
<evidence type="ECO:0000255" key="1">
    <source>
        <dbReference type="HAMAP-Rule" id="MF_01633"/>
    </source>
</evidence>